<comment type="function">
    <text evidence="1">Catalyzes the stereospecific hydrolysis of the cyclic amide bond of D-hydantoin derivatives with an aromatic side chains at the 5'-position. Has no activity on dihydropyrimidines. The physiological function is unknown.</text>
</comment>
<comment type="catalytic activity">
    <reaction evidence="1">
        <text>D-5-phenylhydantoin + H2O = N-carbamoyl-D-phenylglycine + H(+)</text>
        <dbReference type="Rhea" id="RHEA:51664"/>
        <dbReference type="ChEBI" id="CHEBI:15377"/>
        <dbReference type="ChEBI" id="CHEBI:15378"/>
        <dbReference type="ChEBI" id="CHEBI:140750"/>
        <dbReference type="ChEBI" id="CHEBI:140758"/>
    </reaction>
</comment>
<comment type="cofactor">
    <cofactor evidence="1">
        <name>a divalent metal cation</name>
        <dbReference type="ChEBI" id="CHEBI:60240"/>
    </cofactor>
    <text evidence="1">Binds 2 divalent metal cations per subunit.</text>
</comment>
<comment type="subunit">
    <text evidence="1">Homotetramer.</text>
</comment>
<comment type="PTM">
    <text evidence="1">Carboxylation allows a single lysine to coordinate two divalent metal cations.</text>
</comment>
<comment type="similarity">
    <text evidence="1">Belongs to the metallo-dependent hydrolases superfamily. Hydantoinase/dihydropyrimidinase family.</text>
</comment>
<name>PHYDA_ECOL5</name>
<evidence type="ECO:0000255" key="1">
    <source>
        <dbReference type="HAMAP-Rule" id="MF_01644"/>
    </source>
</evidence>
<gene>
    <name evidence="1" type="primary">hyuA</name>
    <name type="ordered locus">ECP_2867</name>
</gene>
<protein>
    <recommendedName>
        <fullName evidence="1">D-phenylhydantoinase</fullName>
        <ecNumber evidence="1">3.5.2.-</ecNumber>
    </recommendedName>
    <alternativeName>
        <fullName evidence="1">Hydantoin-utilizing enzyme HyuA</fullName>
    </alternativeName>
</protein>
<organism>
    <name type="scientific">Escherichia coli O6:K15:H31 (strain 536 / UPEC)</name>
    <dbReference type="NCBI Taxonomy" id="362663"/>
    <lineage>
        <taxon>Bacteria</taxon>
        <taxon>Pseudomonadati</taxon>
        <taxon>Pseudomonadota</taxon>
        <taxon>Gammaproteobacteria</taxon>
        <taxon>Enterobacterales</taxon>
        <taxon>Enterobacteriaceae</taxon>
        <taxon>Escherichia</taxon>
    </lineage>
</organism>
<keyword id="KW-0378">Hydrolase</keyword>
<keyword id="KW-0479">Metal-binding</keyword>
<dbReference type="EC" id="3.5.2.-" evidence="1"/>
<dbReference type="EMBL" id="CP000247">
    <property type="protein sequence ID" value="ABG70851.1"/>
    <property type="molecule type" value="Genomic_DNA"/>
</dbReference>
<dbReference type="RefSeq" id="WP_001264434.1">
    <property type="nucleotide sequence ID" value="NC_008253.1"/>
</dbReference>
<dbReference type="SMR" id="Q0TDX8"/>
<dbReference type="KEGG" id="ecp:ECP_2867"/>
<dbReference type="HOGENOM" id="CLU_015572_2_0_6"/>
<dbReference type="Proteomes" id="UP000009182">
    <property type="component" value="Chromosome"/>
</dbReference>
<dbReference type="GO" id="GO:0005829">
    <property type="term" value="C:cytosol"/>
    <property type="evidence" value="ECO:0007669"/>
    <property type="project" value="TreeGrafter"/>
</dbReference>
<dbReference type="GO" id="GO:0016812">
    <property type="term" value="F:hydrolase activity, acting on carbon-nitrogen (but not peptide) bonds, in cyclic amides"/>
    <property type="evidence" value="ECO:0007669"/>
    <property type="project" value="UniProtKB-UniRule"/>
</dbReference>
<dbReference type="GO" id="GO:0046872">
    <property type="term" value="F:metal ion binding"/>
    <property type="evidence" value="ECO:0007669"/>
    <property type="project" value="UniProtKB-KW"/>
</dbReference>
<dbReference type="GO" id="GO:0006208">
    <property type="term" value="P:pyrimidine nucleobase catabolic process"/>
    <property type="evidence" value="ECO:0007669"/>
    <property type="project" value="InterPro"/>
</dbReference>
<dbReference type="CDD" id="cd01314">
    <property type="entry name" value="D-HYD"/>
    <property type="match status" value="1"/>
</dbReference>
<dbReference type="FunFam" id="3.20.20.140:FF:000026">
    <property type="entry name" value="D-phenylhydantoinase"/>
    <property type="match status" value="1"/>
</dbReference>
<dbReference type="Gene3D" id="3.20.20.140">
    <property type="entry name" value="Metal-dependent hydrolases"/>
    <property type="match status" value="1"/>
</dbReference>
<dbReference type="Gene3D" id="2.30.40.10">
    <property type="entry name" value="Urease, subunit C, domain 1"/>
    <property type="match status" value="1"/>
</dbReference>
<dbReference type="HAMAP" id="MF_01644">
    <property type="entry name" value="D_hydantoinase"/>
    <property type="match status" value="1"/>
</dbReference>
<dbReference type="InterPro" id="IPR006680">
    <property type="entry name" value="Amidohydro-rel"/>
</dbReference>
<dbReference type="InterPro" id="IPR023766">
    <property type="entry name" value="D_phenylhydantoinase"/>
</dbReference>
<dbReference type="InterPro" id="IPR011778">
    <property type="entry name" value="Hydantoinase/dihydroPyrase"/>
</dbReference>
<dbReference type="InterPro" id="IPR011059">
    <property type="entry name" value="Metal-dep_hydrolase_composite"/>
</dbReference>
<dbReference type="InterPro" id="IPR032466">
    <property type="entry name" value="Metal_Hydrolase"/>
</dbReference>
<dbReference type="InterPro" id="IPR050378">
    <property type="entry name" value="Metallo-dep_Hydrolases_sf"/>
</dbReference>
<dbReference type="NCBIfam" id="TIGR02033">
    <property type="entry name" value="D-hydantoinase"/>
    <property type="match status" value="1"/>
</dbReference>
<dbReference type="PANTHER" id="PTHR11647:SF1">
    <property type="entry name" value="COLLAPSIN RESPONSE MEDIATOR PROTEIN"/>
    <property type="match status" value="1"/>
</dbReference>
<dbReference type="PANTHER" id="PTHR11647">
    <property type="entry name" value="HYDRANTOINASE/DIHYDROPYRIMIDINASE FAMILY MEMBER"/>
    <property type="match status" value="1"/>
</dbReference>
<dbReference type="Pfam" id="PF01979">
    <property type="entry name" value="Amidohydro_1"/>
    <property type="match status" value="1"/>
</dbReference>
<dbReference type="SUPFAM" id="SSF51338">
    <property type="entry name" value="Composite domain of metallo-dependent hydrolases"/>
    <property type="match status" value="2"/>
</dbReference>
<dbReference type="SUPFAM" id="SSF51556">
    <property type="entry name" value="Metallo-dependent hydrolases"/>
    <property type="match status" value="1"/>
</dbReference>
<feature type="chain" id="PRO_0000317653" description="D-phenylhydantoinase">
    <location>
        <begin position="1"/>
        <end position="461"/>
    </location>
</feature>
<feature type="binding site" evidence="1">
    <location>
        <position position="59"/>
    </location>
    <ligand>
        <name>a divalent metal cation</name>
        <dbReference type="ChEBI" id="CHEBI:60240"/>
        <label>1</label>
    </ligand>
</feature>
<feature type="binding site" evidence="1">
    <location>
        <position position="61"/>
    </location>
    <ligand>
        <name>a divalent metal cation</name>
        <dbReference type="ChEBI" id="CHEBI:60240"/>
        <label>1</label>
    </ligand>
</feature>
<feature type="binding site" description="via carbamate group" evidence="1">
    <location>
        <position position="151"/>
    </location>
    <ligand>
        <name>a divalent metal cation</name>
        <dbReference type="ChEBI" id="CHEBI:60240"/>
        <label>1</label>
    </ligand>
</feature>
<feature type="binding site" description="via carbamate group" evidence="1">
    <location>
        <position position="151"/>
    </location>
    <ligand>
        <name>a divalent metal cation</name>
        <dbReference type="ChEBI" id="CHEBI:60240"/>
        <label>2</label>
    </ligand>
</feature>
<feature type="binding site" evidence="1">
    <location>
        <position position="156"/>
    </location>
    <ligand>
        <name>substrate</name>
    </ligand>
</feature>
<feature type="binding site" evidence="1">
    <location>
        <position position="182"/>
    </location>
    <ligand>
        <name>a divalent metal cation</name>
        <dbReference type="ChEBI" id="CHEBI:60240"/>
        <label>2</label>
    </ligand>
</feature>
<feature type="binding site" evidence="1">
    <location>
        <position position="239"/>
    </location>
    <ligand>
        <name>a divalent metal cation</name>
        <dbReference type="ChEBI" id="CHEBI:60240"/>
        <label>2</label>
    </ligand>
</feature>
<feature type="binding site" evidence="1">
    <location>
        <position position="286"/>
    </location>
    <ligand>
        <name>substrate</name>
    </ligand>
</feature>
<feature type="binding site" evidence="1">
    <location>
        <position position="313"/>
    </location>
    <ligand>
        <name>a divalent metal cation</name>
        <dbReference type="ChEBI" id="CHEBI:60240"/>
        <label>1</label>
    </ligand>
</feature>
<feature type="binding site" evidence="1">
    <location>
        <position position="335"/>
    </location>
    <ligand>
        <name>substrate</name>
    </ligand>
</feature>
<feature type="modified residue" description="N6-carboxylysine" evidence="1">
    <location>
        <position position="151"/>
    </location>
</feature>
<accession>Q0TDX8</accession>
<sequence length="461" mass="50955">MRVLIKNGIVVNADGQAKQDLLIESGIVRQLGTDISPQLPCEEIDASGCYVFPGGVDVHTHFNIDVGIARSCDDFFTGTRAAACGGTTTIIDHMGFGPNGCRLRHQLEVYRGYAAHKAVIDYSFHGVIQHINHAILDEIPMMVEEGLSSFKLYLTYQYKLNDDEVLQALRRLHESGALTTVHPENDAAIASKRAEFIAAGLTAPRYHALSRPLECEAEAIARMINLAQIAGNAPLYIVHLSNGLGLDYLRLARANHQPVWVETCPQYLLLDERSYDTEDGMKFILSPPLRNVREQDKLWCGISDGAIDVVATDHCTFSMAQRLQISKGDFSRCPNGLPGVENRMQLLFSSGVMTGRISPERFVELTSAMPARLFGLWPQKGLLAPGSDGDVVIIDPRQSQQIQHRHLHDNADYSPWEGFTCQGAIVRTLSRGETIFCDGTFTGKAGRGRFLRRKPFVPPVL</sequence>
<reference key="1">
    <citation type="journal article" date="2006" name="Mol. Microbiol.">
        <title>Role of pathogenicity island-associated integrases in the genome plasticity of uropathogenic Escherichia coli strain 536.</title>
        <authorList>
            <person name="Hochhut B."/>
            <person name="Wilde C."/>
            <person name="Balling G."/>
            <person name="Middendorf B."/>
            <person name="Dobrindt U."/>
            <person name="Brzuszkiewicz E."/>
            <person name="Gottschalk G."/>
            <person name="Carniel E."/>
            <person name="Hacker J."/>
        </authorList>
    </citation>
    <scope>NUCLEOTIDE SEQUENCE [LARGE SCALE GENOMIC DNA]</scope>
    <source>
        <strain>536 / UPEC</strain>
    </source>
</reference>
<proteinExistence type="inferred from homology"/>